<proteinExistence type="inferred from homology"/>
<accession>A4VHH8</accession>
<dbReference type="EC" id="3.6.1.41" evidence="1"/>
<dbReference type="EMBL" id="CP000304">
    <property type="protein sequence ID" value="ABP78429.1"/>
    <property type="molecule type" value="Genomic_DNA"/>
</dbReference>
<dbReference type="RefSeq" id="WP_011911936.1">
    <property type="nucleotide sequence ID" value="NC_009434.1"/>
</dbReference>
<dbReference type="SMR" id="A4VHH8"/>
<dbReference type="KEGG" id="psa:PST_0724"/>
<dbReference type="eggNOG" id="COG0639">
    <property type="taxonomic scope" value="Bacteria"/>
</dbReference>
<dbReference type="HOGENOM" id="CLU_056184_2_0_6"/>
<dbReference type="Proteomes" id="UP000000233">
    <property type="component" value="Chromosome"/>
</dbReference>
<dbReference type="GO" id="GO:0008803">
    <property type="term" value="F:bis(5'-nucleosyl)-tetraphosphatase (symmetrical) activity"/>
    <property type="evidence" value="ECO:0007669"/>
    <property type="project" value="UniProtKB-UniRule"/>
</dbReference>
<dbReference type="CDD" id="cd07422">
    <property type="entry name" value="MPP_ApaH"/>
    <property type="match status" value="1"/>
</dbReference>
<dbReference type="Gene3D" id="3.60.21.10">
    <property type="match status" value="1"/>
</dbReference>
<dbReference type="HAMAP" id="MF_00199">
    <property type="entry name" value="ApaH"/>
    <property type="match status" value="1"/>
</dbReference>
<dbReference type="InterPro" id="IPR004617">
    <property type="entry name" value="ApaH"/>
</dbReference>
<dbReference type="InterPro" id="IPR004843">
    <property type="entry name" value="Calcineurin-like_PHP_ApaH"/>
</dbReference>
<dbReference type="InterPro" id="IPR029052">
    <property type="entry name" value="Metallo-depent_PP-like"/>
</dbReference>
<dbReference type="NCBIfam" id="TIGR00668">
    <property type="entry name" value="apaH"/>
    <property type="match status" value="1"/>
</dbReference>
<dbReference type="NCBIfam" id="NF001204">
    <property type="entry name" value="PRK00166.1"/>
    <property type="match status" value="1"/>
</dbReference>
<dbReference type="PANTHER" id="PTHR40942">
    <property type="match status" value="1"/>
</dbReference>
<dbReference type="PANTHER" id="PTHR40942:SF4">
    <property type="entry name" value="CYTOCHROME C5"/>
    <property type="match status" value="1"/>
</dbReference>
<dbReference type="Pfam" id="PF00149">
    <property type="entry name" value="Metallophos"/>
    <property type="match status" value="1"/>
</dbReference>
<dbReference type="PIRSF" id="PIRSF000903">
    <property type="entry name" value="B5n-ttraPtase_sm"/>
    <property type="match status" value="1"/>
</dbReference>
<dbReference type="SUPFAM" id="SSF56300">
    <property type="entry name" value="Metallo-dependent phosphatases"/>
    <property type="match status" value="1"/>
</dbReference>
<evidence type="ECO:0000255" key="1">
    <source>
        <dbReference type="HAMAP-Rule" id="MF_00199"/>
    </source>
</evidence>
<comment type="function">
    <text evidence="1">Hydrolyzes diadenosine 5',5'''-P1,P4-tetraphosphate to yield ADP.</text>
</comment>
<comment type="catalytic activity">
    <reaction evidence="1">
        <text>P(1),P(4)-bis(5'-adenosyl) tetraphosphate + H2O = 2 ADP + 2 H(+)</text>
        <dbReference type="Rhea" id="RHEA:24252"/>
        <dbReference type="ChEBI" id="CHEBI:15377"/>
        <dbReference type="ChEBI" id="CHEBI:15378"/>
        <dbReference type="ChEBI" id="CHEBI:58141"/>
        <dbReference type="ChEBI" id="CHEBI:456216"/>
        <dbReference type="EC" id="3.6.1.41"/>
    </reaction>
</comment>
<comment type="similarity">
    <text evidence="1">Belongs to the Ap4A hydrolase family.</text>
</comment>
<protein>
    <recommendedName>
        <fullName evidence="1">Bis(5'-nucleosyl)-tetraphosphatase, symmetrical</fullName>
        <ecNumber evidence="1">3.6.1.41</ecNumber>
    </recommendedName>
    <alternativeName>
        <fullName evidence="1">Ap4A hydrolase</fullName>
    </alternativeName>
    <alternativeName>
        <fullName evidence="1">Diadenosine 5',5'''-P1,P4-tetraphosphate pyrophosphohydrolase</fullName>
    </alternativeName>
    <alternativeName>
        <fullName evidence="1">Diadenosine tetraphosphatase</fullName>
    </alternativeName>
</protein>
<reference key="1">
    <citation type="journal article" date="2008" name="Proc. Natl. Acad. Sci. U.S.A.">
        <title>Nitrogen fixation island and rhizosphere competence traits in the genome of root-associated Pseudomonas stutzeri A1501.</title>
        <authorList>
            <person name="Yan Y."/>
            <person name="Yang J."/>
            <person name="Dou Y."/>
            <person name="Chen M."/>
            <person name="Ping S."/>
            <person name="Peng J."/>
            <person name="Lu W."/>
            <person name="Zhang W."/>
            <person name="Yao Z."/>
            <person name="Li H."/>
            <person name="Liu W."/>
            <person name="He S."/>
            <person name="Geng L."/>
            <person name="Zhang X."/>
            <person name="Yang F."/>
            <person name="Yu H."/>
            <person name="Zhan Y."/>
            <person name="Li D."/>
            <person name="Lin Z."/>
            <person name="Wang Y."/>
            <person name="Elmerich C."/>
            <person name="Lin M."/>
            <person name="Jin Q."/>
        </authorList>
    </citation>
    <scope>NUCLEOTIDE SEQUENCE [LARGE SCALE GENOMIC DNA]</scope>
    <source>
        <strain>A1501</strain>
    </source>
</reference>
<gene>
    <name evidence="1" type="primary">apaH</name>
    <name type="ordered locus">PST_0724</name>
</gene>
<name>APAH_STUS1</name>
<keyword id="KW-0378">Hydrolase</keyword>
<keyword id="KW-1185">Reference proteome</keyword>
<sequence>MTTYAVGDLQGCLEPLTCLLERVDFSPSRDCLWLAGDLVNRGPQSLEALRFVRDLESSAITVLGNHDLHLLAVAHNIERMRKSDTLQAILDAPDRADLIDWLRQQKLIHYDAERHTAMVHAGIPPQWSLEKALRRAAEVEQALQDDALLLPFLDGMYGNQPAKWNKELHGVPRLRLITNYFTRMRFCKADGTLDLDAKEGADSAPAGYAPWFSHASRKTRNVKLIFGHWAALEGQCDEPNVFALDTGCVWGNAMTLMNLDSGEMHRCECEHGKPA</sequence>
<feature type="chain" id="PRO_1000012083" description="Bis(5'-nucleosyl)-tetraphosphatase, symmetrical">
    <location>
        <begin position="1"/>
        <end position="275"/>
    </location>
</feature>
<organism>
    <name type="scientific">Stutzerimonas stutzeri (strain A1501)</name>
    <name type="common">Pseudomonas stutzeri</name>
    <dbReference type="NCBI Taxonomy" id="379731"/>
    <lineage>
        <taxon>Bacteria</taxon>
        <taxon>Pseudomonadati</taxon>
        <taxon>Pseudomonadota</taxon>
        <taxon>Gammaproteobacteria</taxon>
        <taxon>Pseudomonadales</taxon>
        <taxon>Pseudomonadaceae</taxon>
        <taxon>Stutzerimonas</taxon>
    </lineage>
</organism>